<keyword id="KW-0238">DNA-binding</keyword>
<keyword id="KW-0479">Metal-binding</keyword>
<keyword id="KW-1185">Reference proteome</keyword>
<keyword id="KW-0677">Repeat</keyword>
<keyword id="KW-0346">Stress response</keyword>
<keyword id="KW-0804">Transcription</keyword>
<keyword id="KW-0805">Transcription regulation</keyword>
<keyword id="KW-0862">Zinc</keyword>
<keyword id="KW-0863">Zinc-finger</keyword>
<name>ZFP36_ORYSJ</name>
<evidence type="ECO:0000255" key="1">
    <source>
        <dbReference type="PROSITE-ProRule" id="PRU00042"/>
    </source>
</evidence>
<evidence type="ECO:0000256" key="2">
    <source>
        <dbReference type="SAM" id="MobiDB-lite"/>
    </source>
</evidence>
<evidence type="ECO:0000269" key="3">
    <source>
    </source>
</evidence>
<evidence type="ECO:0000269" key="4">
    <source>
    </source>
</evidence>
<evidence type="ECO:0000303" key="5">
    <source>
    </source>
</evidence>
<evidence type="ECO:0000303" key="6">
    <source>
    </source>
</evidence>
<evidence type="ECO:0000305" key="7"/>
<evidence type="ECO:0000312" key="8">
    <source>
        <dbReference type="EMBL" id="AAR89021.1"/>
    </source>
</evidence>
<evidence type="ECO:0000312" key="9">
    <source>
        <dbReference type="EMBL" id="AAU89183.1"/>
    </source>
</evidence>
<evidence type="ECO:0000312" key="10">
    <source>
        <dbReference type="EMBL" id="ABF96814.1"/>
    </source>
</evidence>
<evidence type="ECO:0000312" key="11">
    <source>
        <dbReference type="EMBL" id="BAF12358.1"/>
    </source>
</evidence>
<evidence type="ECO:0000312" key="12">
    <source>
        <dbReference type="EMBL" id="EAZ27446.1"/>
    </source>
</evidence>
<gene>
    <name evidence="5" type="primary">ZFP36</name>
    <name evidence="6" type="synonym">BSR-D1</name>
    <name evidence="11" type="ordered locus">Os03g0437200</name>
    <name evidence="10" type="ordered locus">LOC_Os03g32230</name>
    <name evidence="12" type="ORF">OsJ_11395</name>
    <name evidence="8" type="ORF">OSJNBa0054H04.4</name>
    <name evidence="9" type="ORF">OSJNBb0034P05.8</name>
</gene>
<protein>
    <recommendedName>
        <fullName evidence="5">Zinc finger protein 36</fullName>
    </recommendedName>
    <alternativeName>
        <fullName evidence="6">Protein BROAD-SPECTRUM RESISTANCE DIGU 1</fullName>
    </alternativeName>
</protein>
<proteinExistence type="evidence at transcript level"/>
<sequence length="220" mass="22804">MTAALQALLDPTALSLGLPTPAINKEEYLAICLAALACTRAGKALVGVGGQQQVQACNKWLCPAPAAPEELRFRCTVCGKAFASYQALGGHKSSHRKPPSPGDHYGAAAAAQQLASAGDSKEDSASSAAGSTGPHRCTICRRSFATGQALGGHKRCHYWDGTSVSVSVSASASAASSAVRNFDLNLMPLPESTAAAGIKRWAEEEEVQSPLPVKKLRMSN</sequence>
<dbReference type="EMBL" id="HQ858823">
    <property type="protein sequence ID" value="ADX60235.1"/>
    <property type="molecule type" value="mRNA"/>
</dbReference>
<dbReference type="EMBL" id="AY295345">
    <property type="protein sequence ID" value="AAP51130.1"/>
    <property type="molecule type" value="mRNA"/>
</dbReference>
<dbReference type="EMBL" id="AC106887">
    <property type="protein sequence ID" value="AAR89021.1"/>
    <property type="molecule type" value="Genomic_DNA"/>
</dbReference>
<dbReference type="EMBL" id="AC147803">
    <property type="protein sequence ID" value="AAU89183.1"/>
    <property type="molecule type" value="Genomic_DNA"/>
</dbReference>
<dbReference type="EMBL" id="DP000009">
    <property type="protein sequence ID" value="ABF96814.1"/>
    <property type="molecule type" value="Genomic_DNA"/>
</dbReference>
<dbReference type="EMBL" id="AP008209">
    <property type="protein sequence ID" value="BAF12358.1"/>
    <property type="molecule type" value="Genomic_DNA"/>
</dbReference>
<dbReference type="EMBL" id="AP014959">
    <property type="protein sequence ID" value="BAS84848.1"/>
    <property type="molecule type" value="Genomic_DNA"/>
</dbReference>
<dbReference type="EMBL" id="CM000140">
    <property type="protein sequence ID" value="EAZ27446.1"/>
    <property type="molecule type" value="Genomic_DNA"/>
</dbReference>
<dbReference type="EMBL" id="AK059839">
    <property type="protein sequence ID" value="BAG87161.1"/>
    <property type="molecule type" value="mRNA"/>
</dbReference>
<dbReference type="FunCoup" id="Q75KE5">
    <property type="interactions" value="192"/>
</dbReference>
<dbReference type="STRING" id="39947.Q75KE5"/>
<dbReference type="PaxDb" id="39947-Q75KE5"/>
<dbReference type="EnsemblPlants" id="Os03t0437200-01">
    <property type="protein sequence ID" value="Os03t0437200-01"/>
    <property type="gene ID" value="Os03g0437200"/>
</dbReference>
<dbReference type="Gramene" id="Os03t0437200-01">
    <property type="protein sequence ID" value="Os03t0437200-01"/>
    <property type="gene ID" value="Os03g0437200"/>
</dbReference>
<dbReference type="KEGG" id="dosa:Os03g0437200"/>
<dbReference type="KEGG" id="osa:4333197"/>
<dbReference type="eggNOG" id="KOG1721">
    <property type="taxonomic scope" value="Eukaryota"/>
</dbReference>
<dbReference type="HOGENOM" id="CLU_059471_1_1_1"/>
<dbReference type="InParanoid" id="Q75KE5"/>
<dbReference type="OMA" id="PESYAGM"/>
<dbReference type="OrthoDB" id="40579at2759"/>
<dbReference type="PlantReactome" id="R-OSA-9826782">
    <property type="pathway name" value="Regulation of seed germination and coleoptile growth under submergence and normal gravity environment"/>
</dbReference>
<dbReference type="Proteomes" id="UP000000763">
    <property type="component" value="Chromosome 3"/>
</dbReference>
<dbReference type="Proteomes" id="UP000007752">
    <property type="component" value="Chromosome 3"/>
</dbReference>
<dbReference type="Proteomes" id="UP000059680">
    <property type="component" value="Chromosome 3"/>
</dbReference>
<dbReference type="GO" id="GO:0005634">
    <property type="term" value="C:nucleus"/>
    <property type="evidence" value="ECO:0000318"/>
    <property type="project" value="GO_Central"/>
</dbReference>
<dbReference type="GO" id="GO:0003700">
    <property type="term" value="F:DNA-binding transcription factor activity"/>
    <property type="evidence" value="ECO:0000318"/>
    <property type="project" value="GO_Central"/>
</dbReference>
<dbReference type="GO" id="GO:0000976">
    <property type="term" value="F:transcription cis-regulatory region binding"/>
    <property type="evidence" value="ECO:0000318"/>
    <property type="project" value="GO_Central"/>
</dbReference>
<dbReference type="GO" id="GO:0008270">
    <property type="term" value="F:zinc ion binding"/>
    <property type="evidence" value="ECO:0007669"/>
    <property type="project" value="UniProtKB-KW"/>
</dbReference>
<dbReference type="GO" id="GO:0006355">
    <property type="term" value="P:regulation of DNA-templated transcription"/>
    <property type="evidence" value="ECO:0000318"/>
    <property type="project" value="GO_Central"/>
</dbReference>
<dbReference type="GO" id="GO:0006979">
    <property type="term" value="P:response to oxidative stress"/>
    <property type="evidence" value="ECO:0000315"/>
    <property type="project" value="UniProtKB"/>
</dbReference>
<dbReference type="GO" id="GO:0009414">
    <property type="term" value="P:response to water deprivation"/>
    <property type="evidence" value="ECO:0000315"/>
    <property type="project" value="UniProtKB"/>
</dbReference>
<dbReference type="Gene3D" id="3.30.160.60">
    <property type="entry name" value="Classic Zinc Finger"/>
    <property type="match status" value="1"/>
</dbReference>
<dbReference type="InterPro" id="IPR044653">
    <property type="entry name" value="AZF1/2/3-like"/>
</dbReference>
<dbReference type="InterPro" id="IPR036236">
    <property type="entry name" value="Znf_C2H2_sf"/>
</dbReference>
<dbReference type="InterPro" id="IPR013087">
    <property type="entry name" value="Znf_C2H2_type"/>
</dbReference>
<dbReference type="PANTHER" id="PTHR45988">
    <property type="entry name" value="C2H2 TYPE ZINC FINGER TRANSCRIPTION FACTOR FAMILY-RELATED"/>
    <property type="match status" value="1"/>
</dbReference>
<dbReference type="PANTHER" id="PTHR45988:SF16">
    <property type="entry name" value="ZINC FINGER PROTEIN 36"/>
    <property type="match status" value="1"/>
</dbReference>
<dbReference type="Pfam" id="PF13912">
    <property type="entry name" value="zf-C2H2_6"/>
    <property type="match status" value="2"/>
</dbReference>
<dbReference type="SMART" id="SM00355">
    <property type="entry name" value="ZnF_C2H2"/>
    <property type="match status" value="2"/>
</dbReference>
<dbReference type="SUPFAM" id="SSF57667">
    <property type="entry name" value="beta-beta-alpha zinc fingers"/>
    <property type="match status" value="1"/>
</dbReference>
<dbReference type="PROSITE" id="PS00028">
    <property type="entry name" value="ZINC_FINGER_C2H2_1"/>
    <property type="match status" value="2"/>
</dbReference>
<dbReference type="PROSITE" id="PS50157">
    <property type="entry name" value="ZINC_FINGER_C2H2_2"/>
    <property type="match status" value="2"/>
</dbReference>
<feature type="chain" id="PRO_0000441774" description="Zinc finger protein 36">
    <location>
        <begin position="1"/>
        <end position="220"/>
    </location>
</feature>
<feature type="zinc finger region" description="C2H2-type 1" evidence="1">
    <location>
        <begin position="73"/>
        <end position="95"/>
    </location>
</feature>
<feature type="zinc finger region" description="C2H2-type 2" evidence="1">
    <location>
        <begin position="135"/>
        <end position="157"/>
    </location>
</feature>
<feature type="region of interest" description="Disordered" evidence="2">
    <location>
        <begin position="90"/>
        <end position="134"/>
    </location>
</feature>
<feature type="compositionally biased region" description="Low complexity" evidence="2">
    <location>
        <begin position="107"/>
        <end position="117"/>
    </location>
</feature>
<feature type="sequence conflict" description="In Ref. 2; AAP51130." evidence="7" ref="2">
    <original>N</original>
    <variation>S</variation>
    <location>
        <position position="58"/>
    </location>
</feature>
<feature type="sequence conflict" description="In Ref. 7; EAZ27446." evidence="7" ref="7">
    <original>S</original>
    <variation>F</variation>
    <location>
        <position position="100"/>
    </location>
</feature>
<comment type="function">
    <text evidence="3">Probable transcription factor involved in abscisic acid (ABA) signaling. Required for the regulation of the cross-talk between NADPH oxidase, hydrogen peroxide and MAP kinase in ABA signaling. Regulates the expression of the NADPH oxidase genes RBOHB and RBOHE, and the MAPK genes MPK1, MPK4, MPK5, MPK7 and MPK14. Regulates ABA-induced hydrogen peroxide production and antioxidant defense. Required for tolerance to water stress and oxidative stress.</text>
</comment>
<comment type="induction">
    <text evidence="3">Induced by abscisic acid (ABA) and hydrogen peroxide.</text>
</comment>
<comment type="miscellaneous">
    <text evidence="3 4">Plants over-expressing ZFP36 display enhanced tolerance to drought and oxidative stresses (PubMed:25071223). A natural allele in the promoter of ZFP36 in the durably resistant rice variety Digu confers broad-spectrum resistance to rice blast (Magnaporthe oryzae) (PubMed:28666113).</text>
</comment>
<organism>
    <name type="scientific">Oryza sativa subsp. japonica</name>
    <name type="common">Rice</name>
    <dbReference type="NCBI Taxonomy" id="39947"/>
    <lineage>
        <taxon>Eukaryota</taxon>
        <taxon>Viridiplantae</taxon>
        <taxon>Streptophyta</taxon>
        <taxon>Embryophyta</taxon>
        <taxon>Tracheophyta</taxon>
        <taxon>Spermatophyta</taxon>
        <taxon>Magnoliopsida</taxon>
        <taxon>Liliopsida</taxon>
        <taxon>Poales</taxon>
        <taxon>Poaceae</taxon>
        <taxon>BOP clade</taxon>
        <taxon>Oryzoideae</taxon>
        <taxon>Oryzeae</taxon>
        <taxon>Oryzinae</taxon>
        <taxon>Oryza</taxon>
        <taxon>Oryza sativa</taxon>
    </lineage>
</organism>
<accession>Q75KE5</accession>
<accession>A3AJF7</accession>
<accession>Q7X9P9</accession>
<reference key="1">
    <citation type="journal article" date="2009" name="Plant Physiol.">
        <title>GRASSIUS: a platform for comparative regulatory genomics across the grasses.</title>
        <authorList>
            <person name="Yilmaz A."/>
            <person name="Nishiyama M.Y."/>
            <person name="Fuentes B.G."/>
            <person name="Souza G.M."/>
            <person name="Janies D."/>
            <person name="Gray J."/>
            <person name="Grotewold E."/>
        </authorList>
    </citation>
    <scope>NUCLEOTIDE SEQUENCE [MRNA]</scope>
    <source>
        <strain>cv. Nipponbare</strain>
    </source>
</reference>
<reference key="2">
    <citation type="journal article" date="2014" name="J. Exp. Bot.">
        <title>A novel rice C2H2-type zinc finger protein, ZFP36, is a key player involved in abscisic acid-induced antioxidant defence and oxidative stress tolerance in rice.</title>
        <authorList>
            <person name="Zhang H."/>
            <person name="Liu Y."/>
            <person name="Wen F."/>
            <person name="Yao D."/>
            <person name="Wang L."/>
            <person name="Guo J."/>
            <person name="Ni L."/>
            <person name="Zhang A."/>
            <person name="Tan M."/>
            <person name="Jiang M."/>
        </authorList>
    </citation>
    <scope>NUCLEOTIDE SEQUENCE [MRNA]</scope>
    <scope>FUNCTION</scope>
    <scope>INDUCTION</scope>
    <source>
        <strain>cv. Jiu Caiqing</strain>
    </source>
</reference>
<reference key="3">
    <citation type="journal article" date="2005" name="Genome Res.">
        <title>Sequence, annotation, and analysis of synteny between rice chromosome 3 and diverged grass species.</title>
        <authorList>
            <consortium name="The rice chromosome 3 sequencing consortium"/>
            <person name="Buell C.R."/>
            <person name="Yuan Q."/>
            <person name="Ouyang S."/>
            <person name="Liu J."/>
            <person name="Zhu W."/>
            <person name="Wang A."/>
            <person name="Maiti R."/>
            <person name="Haas B."/>
            <person name="Wortman J."/>
            <person name="Pertea M."/>
            <person name="Jones K.M."/>
            <person name="Kim M."/>
            <person name="Overton L."/>
            <person name="Tsitrin T."/>
            <person name="Fadrosh D."/>
            <person name="Bera J."/>
            <person name="Weaver B."/>
            <person name="Jin S."/>
            <person name="Johri S."/>
            <person name="Reardon M."/>
            <person name="Webb K."/>
            <person name="Hill J."/>
            <person name="Moffat K."/>
            <person name="Tallon L."/>
            <person name="Van Aken S."/>
            <person name="Lewis M."/>
            <person name="Utterback T."/>
            <person name="Feldblyum T."/>
            <person name="Zismann V."/>
            <person name="Iobst S."/>
            <person name="Hsiao J."/>
            <person name="de Vazeille A.R."/>
            <person name="Salzberg S.L."/>
            <person name="White O."/>
            <person name="Fraser C.M."/>
            <person name="Yu Y."/>
            <person name="Kim H."/>
            <person name="Rambo T."/>
            <person name="Currie J."/>
            <person name="Collura K."/>
            <person name="Kernodle-Thompson S."/>
            <person name="Wei F."/>
            <person name="Kudrna K."/>
            <person name="Ammiraju J.S.S."/>
            <person name="Luo M."/>
            <person name="Goicoechea J.L."/>
            <person name="Wing R.A."/>
            <person name="Henry D."/>
            <person name="Oates R."/>
            <person name="Palmer M."/>
            <person name="Pries G."/>
            <person name="Saski C."/>
            <person name="Simmons J."/>
            <person name="Soderlund C."/>
            <person name="Nelson W."/>
            <person name="de la Bastide M."/>
            <person name="Spiegel L."/>
            <person name="Nascimento L."/>
            <person name="Huang E."/>
            <person name="Preston R."/>
            <person name="Zutavern T."/>
            <person name="Palmer L."/>
            <person name="O'Shaughnessy A."/>
            <person name="Dike S."/>
            <person name="McCombie W.R."/>
            <person name="Minx P."/>
            <person name="Cordum H."/>
            <person name="Wilson R."/>
            <person name="Jin W."/>
            <person name="Lee H.R."/>
            <person name="Jiang J."/>
            <person name="Jackson S."/>
        </authorList>
    </citation>
    <scope>NUCLEOTIDE SEQUENCE [LARGE SCALE GENOMIC DNA]</scope>
    <source>
        <strain>cv. Nipponbare</strain>
    </source>
</reference>
<reference key="4">
    <citation type="journal article" date="2005" name="Nature">
        <title>The map-based sequence of the rice genome.</title>
        <authorList>
            <consortium name="International rice genome sequencing project (IRGSP)"/>
        </authorList>
    </citation>
    <scope>NUCLEOTIDE SEQUENCE [LARGE SCALE GENOMIC DNA]</scope>
    <source>
        <strain>cv. Nipponbare</strain>
    </source>
</reference>
<reference key="5">
    <citation type="journal article" date="2008" name="Nucleic Acids Res.">
        <title>The rice annotation project database (RAP-DB): 2008 update.</title>
        <authorList>
            <consortium name="The rice annotation project (RAP)"/>
        </authorList>
    </citation>
    <scope>GENOME REANNOTATION</scope>
    <source>
        <strain>cv. Nipponbare</strain>
    </source>
</reference>
<reference key="6">
    <citation type="journal article" date="2013" name="Rice">
        <title>Improvement of the Oryza sativa Nipponbare reference genome using next generation sequence and optical map data.</title>
        <authorList>
            <person name="Kawahara Y."/>
            <person name="de la Bastide M."/>
            <person name="Hamilton J.P."/>
            <person name="Kanamori H."/>
            <person name="McCombie W.R."/>
            <person name="Ouyang S."/>
            <person name="Schwartz D.C."/>
            <person name="Tanaka T."/>
            <person name="Wu J."/>
            <person name="Zhou S."/>
            <person name="Childs K.L."/>
            <person name="Davidson R.M."/>
            <person name="Lin H."/>
            <person name="Quesada-Ocampo L."/>
            <person name="Vaillancourt B."/>
            <person name="Sakai H."/>
            <person name="Lee S.S."/>
            <person name="Kim J."/>
            <person name="Numa H."/>
            <person name="Itoh T."/>
            <person name="Buell C.R."/>
            <person name="Matsumoto T."/>
        </authorList>
    </citation>
    <scope>GENOME REANNOTATION</scope>
    <source>
        <strain>cv. Nipponbare</strain>
    </source>
</reference>
<reference key="7">
    <citation type="journal article" date="2005" name="PLoS Biol.">
        <title>The genomes of Oryza sativa: a history of duplications.</title>
        <authorList>
            <person name="Yu J."/>
            <person name="Wang J."/>
            <person name="Lin W."/>
            <person name="Li S."/>
            <person name="Li H."/>
            <person name="Zhou J."/>
            <person name="Ni P."/>
            <person name="Dong W."/>
            <person name="Hu S."/>
            <person name="Zeng C."/>
            <person name="Zhang J."/>
            <person name="Zhang Y."/>
            <person name="Li R."/>
            <person name="Xu Z."/>
            <person name="Li S."/>
            <person name="Li X."/>
            <person name="Zheng H."/>
            <person name="Cong L."/>
            <person name="Lin L."/>
            <person name="Yin J."/>
            <person name="Geng J."/>
            <person name="Li G."/>
            <person name="Shi J."/>
            <person name="Liu J."/>
            <person name="Lv H."/>
            <person name="Li J."/>
            <person name="Wang J."/>
            <person name="Deng Y."/>
            <person name="Ran L."/>
            <person name="Shi X."/>
            <person name="Wang X."/>
            <person name="Wu Q."/>
            <person name="Li C."/>
            <person name="Ren X."/>
            <person name="Wang J."/>
            <person name="Wang X."/>
            <person name="Li D."/>
            <person name="Liu D."/>
            <person name="Zhang X."/>
            <person name="Ji Z."/>
            <person name="Zhao W."/>
            <person name="Sun Y."/>
            <person name="Zhang Z."/>
            <person name="Bao J."/>
            <person name="Han Y."/>
            <person name="Dong L."/>
            <person name="Ji J."/>
            <person name="Chen P."/>
            <person name="Wu S."/>
            <person name="Liu J."/>
            <person name="Xiao Y."/>
            <person name="Bu D."/>
            <person name="Tan J."/>
            <person name="Yang L."/>
            <person name="Ye C."/>
            <person name="Zhang J."/>
            <person name="Xu J."/>
            <person name="Zhou Y."/>
            <person name="Yu Y."/>
            <person name="Zhang B."/>
            <person name="Zhuang S."/>
            <person name="Wei H."/>
            <person name="Liu B."/>
            <person name="Lei M."/>
            <person name="Yu H."/>
            <person name="Li Y."/>
            <person name="Xu H."/>
            <person name="Wei S."/>
            <person name="He X."/>
            <person name="Fang L."/>
            <person name="Zhang Z."/>
            <person name="Zhang Y."/>
            <person name="Huang X."/>
            <person name="Su Z."/>
            <person name="Tong W."/>
            <person name="Li J."/>
            <person name="Tong Z."/>
            <person name="Li S."/>
            <person name="Ye J."/>
            <person name="Wang L."/>
            <person name="Fang L."/>
            <person name="Lei T."/>
            <person name="Chen C.-S."/>
            <person name="Chen H.-C."/>
            <person name="Xu Z."/>
            <person name="Li H."/>
            <person name="Huang H."/>
            <person name="Zhang F."/>
            <person name="Xu H."/>
            <person name="Li N."/>
            <person name="Zhao C."/>
            <person name="Li S."/>
            <person name="Dong L."/>
            <person name="Huang Y."/>
            <person name="Li L."/>
            <person name="Xi Y."/>
            <person name="Qi Q."/>
            <person name="Li W."/>
            <person name="Zhang B."/>
            <person name="Hu W."/>
            <person name="Zhang Y."/>
            <person name="Tian X."/>
            <person name="Jiao Y."/>
            <person name="Liang X."/>
            <person name="Jin J."/>
            <person name="Gao L."/>
            <person name="Zheng W."/>
            <person name="Hao B."/>
            <person name="Liu S.-M."/>
            <person name="Wang W."/>
            <person name="Yuan L."/>
            <person name="Cao M."/>
            <person name="McDermott J."/>
            <person name="Samudrala R."/>
            <person name="Wang J."/>
            <person name="Wong G.K.-S."/>
            <person name="Yang H."/>
        </authorList>
    </citation>
    <scope>NUCLEOTIDE SEQUENCE [LARGE SCALE GENOMIC DNA]</scope>
    <source>
        <strain>cv. Nipponbare</strain>
    </source>
</reference>
<reference key="8">
    <citation type="journal article" date="2003" name="Science">
        <title>Collection, mapping, and annotation of over 28,000 cDNA clones from japonica rice.</title>
        <authorList>
            <consortium name="The rice full-length cDNA consortium"/>
        </authorList>
    </citation>
    <scope>NUCLEOTIDE SEQUENCE [LARGE SCALE MRNA]</scope>
    <source>
        <strain>cv. Nipponbare</strain>
    </source>
</reference>
<reference key="9">
    <citation type="journal article" date="2017" name="Cell">
        <title>A natural allele of a transcription factor in rice confers broad-spectrum blast resistance.</title>
        <authorList>
            <person name="Li W."/>
            <person name="Zhu Z."/>
            <person name="Chern M."/>
            <person name="Yin J."/>
            <person name="Yang C."/>
            <person name="Ran L."/>
            <person name="Cheng M."/>
            <person name="He M."/>
            <person name="Wang K."/>
            <person name="Wang J."/>
            <person name="Zhou X."/>
            <person name="Zhu X."/>
            <person name="Chen Z."/>
            <person name="Wang J."/>
            <person name="Zhao W."/>
            <person name="Ma B."/>
            <person name="Qin P."/>
            <person name="Chen W."/>
            <person name="Wang Y."/>
            <person name="Liu J."/>
            <person name="Wang W."/>
            <person name="Wu X."/>
            <person name="Li P."/>
            <person name="Wang J."/>
            <person name="Zhu L."/>
            <person name="Li S."/>
            <person name="Chen X."/>
        </authorList>
    </citation>
    <scope>MISCELLANEOUS</scope>
</reference>